<gene>
    <name type="primary">hspA</name>
    <name type="ordered locus">blr5230</name>
</gene>
<protein>
    <recommendedName>
        <fullName>Small heat shock protein HspA</fullName>
    </recommendedName>
</protein>
<organism>
    <name type="scientific">Bradyrhizobium diazoefficiens (strain JCM 10833 / BCRC 13528 / IAM 13628 / NBRC 14792 / USDA 110)</name>
    <dbReference type="NCBI Taxonomy" id="224911"/>
    <lineage>
        <taxon>Bacteria</taxon>
        <taxon>Pseudomonadati</taxon>
        <taxon>Pseudomonadota</taxon>
        <taxon>Alphaproteobacteria</taxon>
        <taxon>Hyphomicrobiales</taxon>
        <taxon>Nitrobacteraceae</taxon>
        <taxon>Bradyrhizobium</taxon>
    </lineage>
</organism>
<comment type="similarity">
    <text evidence="1">Belongs to the small heat shock protein (HSP20) family.</text>
</comment>
<accession>P70917</accession>
<name>HSPA_BRADU</name>
<evidence type="ECO:0000255" key="1">
    <source>
        <dbReference type="PROSITE-ProRule" id="PRU00285"/>
    </source>
</evidence>
<reference key="1">
    <citation type="journal article" date="1996" name="J. Bacteriol.">
        <title>The Bradyrhizobium japonicum rpoH1 gene encoding a sigma 32-like protein is part of a unique heat shock gene cluster together with groESL1 and three small heat shock genes.</title>
        <authorList>
            <person name="Narberhaus F."/>
            <person name="Weiglhofer W."/>
            <person name="Fischer H.-M."/>
            <person name="Hennecke H."/>
        </authorList>
    </citation>
    <scope>NUCLEOTIDE SEQUENCE [GENOMIC DNA]</scope>
</reference>
<reference key="2">
    <citation type="journal article" date="2002" name="DNA Res.">
        <title>Complete genomic sequence of nitrogen-fixing symbiotic bacterium Bradyrhizobium japonicum USDA110.</title>
        <authorList>
            <person name="Kaneko T."/>
            <person name="Nakamura Y."/>
            <person name="Sato S."/>
            <person name="Minamisawa K."/>
            <person name="Uchiumi T."/>
            <person name="Sasamoto S."/>
            <person name="Watanabe A."/>
            <person name="Idesawa K."/>
            <person name="Iriguchi M."/>
            <person name="Kawashima K."/>
            <person name="Kohara M."/>
            <person name="Matsumoto M."/>
            <person name="Shimpo S."/>
            <person name="Tsuruoka H."/>
            <person name="Wada T."/>
            <person name="Yamada M."/>
            <person name="Tabata S."/>
        </authorList>
    </citation>
    <scope>NUCLEOTIDE SEQUENCE [LARGE SCALE GENOMIC DNA]</scope>
    <source>
        <strain>JCM 10833 / BCRC 13528 / IAM 13628 / NBRC 14792 / USDA 110</strain>
    </source>
</reference>
<proteinExistence type="inferred from homology"/>
<sequence length="152" mass="17189">MRTYNISPLWRSTIGFDRVFDLVDAARHTAGEANYPPCNVERLSDDRYRISLALAGFSPDEITVTAEQSVLTIEGRKGEKGRRDFVYRGISSRPFKRQFGLAAHVRVEGARFDNGLLQIELVREIPDAMKPRRIPIDNLAASDVQQIEREAA</sequence>
<feature type="chain" id="PRO_0000126043" description="Small heat shock protein HspA">
    <location>
        <begin position="1"/>
        <end position="152"/>
    </location>
</feature>
<feature type="domain" description="sHSP" evidence="1">
    <location>
        <begin position="29"/>
        <end position="139"/>
    </location>
</feature>
<dbReference type="EMBL" id="U55047">
    <property type="protein sequence ID" value="AAC44754.1"/>
    <property type="molecule type" value="Genomic_DNA"/>
</dbReference>
<dbReference type="EMBL" id="BA000040">
    <property type="protein sequence ID" value="BAC50495.1"/>
    <property type="molecule type" value="Genomic_DNA"/>
</dbReference>
<dbReference type="RefSeq" id="NP_771870.1">
    <property type="nucleotide sequence ID" value="NC_004463.1"/>
</dbReference>
<dbReference type="RefSeq" id="WP_011087986.1">
    <property type="nucleotide sequence ID" value="NC_004463.1"/>
</dbReference>
<dbReference type="SMR" id="P70917"/>
<dbReference type="STRING" id="224911.AAV28_23525"/>
<dbReference type="EnsemblBacteria" id="BAC50495">
    <property type="protein sequence ID" value="BAC50495"/>
    <property type="gene ID" value="BAC50495"/>
</dbReference>
<dbReference type="GeneID" id="46492226"/>
<dbReference type="KEGG" id="bja:blr5230"/>
<dbReference type="PATRIC" id="fig|224911.44.peg.5116"/>
<dbReference type="eggNOG" id="COG0071">
    <property type="taxonomic scope" value="Bacteria"/>
</dbReference>
<dbReference type="HOGENOM" id="CLU_046737_4_2_5"/>
<dbReference type="InParanoid" id="P70917"/>
<dbReference type="OrthoDB" id="9810618at2"/>
<dbReference type="PhylomeDB" id="P70917"/>
<dbReference type="Proteomes" id="UP000002526">
    <property type="component" value="Chromosome"/>
</dbReference>
<dbReference type="GO" id="GO:0005737">
    <property type="term" value="C:cytoplasm"/>
    <property type="evidence" value="ECO:0000318"/>
    <property type="project" value="GO_Central"/>
</dbReference>
<dbReference type="CDD" id="cd06470">
    <property type="entry name" value="ACD_IbpA-B_like"/>
    <property type="match status" value="1"/>
</dbReference>
<dbReference type="Gene3D" id="2.60.40.790">
    <property type="match status" value="1"/>
</dbReference>
<dbReference type="InterPro" id="IPR002068">
    <property type="entry name" value="A-crystallin/Hsp20_dom"/>
</dbReference>
<dbReference type="InterPro" id="IPR037913">
    <property type="entry name" value="ACD_IbpA/B"/>
</dbReference>
<dbReference type="InterPro" id="IPR008978">
    <property type="entry name" value="HSP20-like_chaperone"/>
</dbReference>
<dbReference type="PANTHER" id="PTHR47062">
    <property type="match status" value="1"/>
</dbReference>
<dbReference type="PANTHER" id="PTHR47062:SF1">
    <property type="entry name" value="SMALL HEAT SHOCK PROTEIN IBPA"/>
    <property type="match status" value="1"/>
</dbReference>
<dbReference type="Pfam" id="PF00011">
    <property type="entry name" value="HSP20"/>
    <property type="match status" value="1"/>
</dbReference>
<dbReference type="SUPFAM" id="SSF49764">
    <property type="entry name" value="HSP20-like chaperones"/>
    <property type="match status" value="1"/>
</dbReference>
<dbReference type="PROSITE" id="PS01031">
    <property type="entry name" value="SHSP"/>
    <property type="match status" value="1"/>
</dbReference>
<keyword id="KW-1185">Reference proteome</keyword>
<keyword id="KW-0346">Stress response</keyword>